<reference key="1">
    <citation type="journal article" date="2001" name="J. Gen. Virol.">
        <title>Determination of the complete nucleotide sequences of RNA1 and RNA2 from greasy grouper (Epinephelus tauvina) nervous necrosis virus, Singapore strain.</title>
        <authorList>
            <person name="Tan C."/>
            <person name="Huang B."/>
            <person name="Chang S.F."/>
            <person name="Ngoh G.H."/>
            <person name="Munday B."/>
            <person name="Chen S.C."/>
            <person name="Kwang J."/>
        </authorList>
    </citation>
    <scope>NUCLEOTIDE SEQUENCE [MRNA]</scope>
    <source>
        <strain>Singapore</strain>
    </source>
</reference>
<proteinExistence type="evidence at transcript level"/>
<sequence>MRRFEFALARMSGAAFCVYTGYRLLTSKWLADRVEDYRQRIIAEKKQILRDAAMIRTQIQREMELVRISVRKGHSHQEAATERNSATETMLGVVEKCGYEPYVISPSPREVGYHGSRQFYSLADFRQDYRRDDITDRHIIVMTDVDYYVDMHELIGLGVPILLYTFQPSTVSGEVKDGYFTITDDSVHYRVAGGKDVRHRIWNYNHDTMYVCSRPRGFWANLMQILRDITGVTAICSFLYTKLGIAPFGDPVTMFTVDQFKMGEHRNIVSIVPFATCRSNLLKISEYGAELEYMRYQQRNNIANFNAVTYISENGPLISLGLEGNFASVQLPLQDFENIRTAYELSKTNNLSDTVRRSGRPCKEAAIIHKCLQAECAVVSEVVHKPGDLARHYQAVGSAYDTDPAEQGKCYAREYAPGPLTQTAVFPSESRSNELATIDGRIAGPQAKAKSREHITPKMRKVARDFVHHLVPIAGTGRPYPLTYVEEQQTKPLQRARNDANRYHDEFTMMVKAFQKKEAYNAPNYPRNISTVPHTQNVKLSSYTYAFKASVLQHVPWYMPTHTPAEIADAVQNLAASSTELVETDYSKFDGTFLRFMRECVEFAIYKRWVHLDHLPELTTLLANEIQAPAVTRLGIKYDPDCSRLSGSALTTDGNSIANAFVSYLAGRMAGMDDDEAWSWIGIVYGDDGLRSGNVSNELLTNTASSLGFDLKIVNRAPRGSPVTFLSRVYLDPWSSPASVQSPLRTLLKLHTTCDTQSEIDDIGWAKTQAYLVTDSKTPFIGHWCRAYQRNCTARVVQYADYADIPFWVKNDDHVGNSWPQSESDDWNDIVANELGVTTAELLKHLALLDAYAGPISGLPRLTTSIDLEPKMSVALDGEIQAGPSQNKTSKDGTNPTSDRSAPRRARAALPGDDGHARRSRRSDRDPGKRDAHVRDKRPRRSSPPTRPVTPVPTPSSGDRGTDGDGLGRAAVRQRQRRRTQV</sequence>
<evidence type="ECO:0000255" key="1">
    <source>
        <dbReference type="PROSITE-ProRule" id="PRU00539"/>
    </source>
</evidence>
<evidence type="ECO:0000256" key="2">
    <source>
        <dbReference type="SAM" id="MobiDB-lite"/>
    </source>
</evidence>
<evidence type="ECO:0000305" key="3"/>
<feature type="chain" id="PRO_0000222447" description="RNA-directed RNA polymerase">
    <location>
        <begin position="1"/>
        <end position="982"/>
    </location>
</feature>
<feature type="domain" description="RdRp catalytic" evidence="1">
    <location>
        <begin position="579"/>
        <end position="701"/>
    </location>
</feature>
<feature type="region of interest" description="Disordered" evidence="2">
    <location>
        <begin position="879"/>
        <end position="982"/>
    </location>
</feature>
<feature type="compositionally biased region" description="Polar residues" evidence="2">
    <location>
        <begin position="883"/>
        <end position="899"/>
    </location>
</feature>
<feature type="compositionally biased region" description="Basic and acidic residues" evidence="2">
    <location>
        <begin position="913"/>
        <end position="934"/>
    </location>
</feature>
<feature type="compositionally biased region" description="Pro residues" evidence="2">
    <location>
        <begin position="945"/>
        <end position="954"/>
    </location>
</feature>
<feature type="compositionally biased region" description="Basic residues" evidence="2">
    <location>
        <begin position="972"/>
        <end position="982"/>
    </location>
</feature>
<keyword id="KW-0547">Nucleotide-binding</keyword>
<keyword id="KW-0548">Nucleotidyltransferase</keyword>
<keyword id="KW-0696">RNA-directed RNA polymerase</keyword>
<keyword id="KW-0808">Transferase</keyword>
<keyword id="KW-0693">Viral RNA replication</keyword>
<dbReference type="EC" id="2.7.7.48"/>
<dbReference type="EMBL" id="AF319555">
    <property type="protein sequence ID" value="AAK21877.1"/>
    <property type="molecule type" value="mRNA"/>
</dbReference>
<dbReference type="SMR" id="Q993M1"/>
<dbReference type="Proteomes" id="UP000267218">
    <property type="component" value="Genome"/>
</dbReference>
<dbReference type="GO" id="GO:0000166">
    <property type="term" value="F:nucleotide binding"/>
    <property type="evidence" value="ECO:0007669"/>
    <property type="project" value="UniProtKB-KW"/>
</dbReference>
<dbReference type="GO" id="GO:0003723">
    <property type="term" value="F:RNA binding"/>
    <property type="evidence" value="ECO:0007669"/>
    <property type="project" value="InterPro"/>
</dbReference>
<dbReference type="GO" id="GO:0003968">
    <property type="term" value="F:RNA-directed RNA polymerase activity"/>
    <property type="evidence" value="ECO:0007669"/>
    <property type="project" value="UniProtKB-KW"/>
</dbReference>
<dbReference type="GO" id="GO:0006351">
    <property type="term" value="P:DNA-templated transcription"/>
    <property type="evidence" value="ECO:0007669"/>
    <property type="project" value="InterPro"/>
</dbReference>
<dbReference type="GO" id="GO:0039694">
    <property type="term" value="P:viral RNA genome replication"/>
    <property type="evidence" value="ECO:0007669"/>
    <property type="project" value="InterPro"/>
</dbReference>
<dbReference type="CDD" id="cd23173">
    <property type="entry name" value="ps-ssRNAv_Nodaviridae_RdRp"/>
    <property type="match status" value="1"/>
</dbReference>
<dbReference type="InterPro" id="IPR043502">
    <property type="entry name" value="DNA/RNA_pol_sf"/>
</dbReference>
<dbReference type="InterPro" id="IPR043647">
    <property type="entry name" value="Noda_Vmethyltr_dom"/>
</dbReference>
<dbReference type="InterPro" id="IPR001205">
    <property type="entry name" value="RNA-dir_pol_C"/>
</dbReference>
<dbReference type="InterPro" id="IPR007094">
    <property type="entry name" value="RNA-dir_pol_PSvirus"/>
</dbReference>
<dbReference type="Pfam" id="PF19222">
    <property type="entry name" value="Noda_Vmethyltr"/>
    <property type="match status" value="1"/>
</dbReference>
<dbReference type="Pfam" id="PF00680">
    <property type="entry name" value="RdRP_1"/>
    <property type="match status" value="1"/>
</dbReference>
<dbReference type="SUPFAM" id="SSF56672">
    <property type="entry name" value="DNA/RNA polymerases"/>
    <property type="match status" value="1"/>
</dbReference>
<dbReference type="PROSITE" id="PS50507">
    <property type="entry name" value="RDRP_SSRNA_POS"/>
    <property type="match status" value="1"/>
</dbReference>
<protein>
    <recommendedName>
        <fullName>RNA-directed RNA polymerase</fullName>
        <shortName>RdRp</shortName>
        <ecNumber>2.7.7.48</ecNumber>
    </recommendedName>
    <alternativeName>
        <fullName>RNA replicase</fullName>
        <shortName>Protein A</shortName>
    </alternativeName>
</protein>
<organismHost>
    <name type="scientific">Epinephelus tauvina</name>
    <name type="common">Greasy grouper</name>
    <name type="synonym">Perca tauvina</name>
    <dbReference type="NCBI Taxonomy" id="203262"/>
</organismHost>
<name>RDRP_GGNNV</name>
<accession>Q993M1</accession>
<organism>
    <name type="scientific">Greasy grouper nervous necrosis virus</name>
    <name type="common">GGNNV</name>
    <name type="synonym">Epinephelus tauvina nervous necrosis virus</name>
    <dbReference type="NCBI Taxonomy" id="143921"/>
    <lineage>
        <taxon>Viruses</taxon>
        <taxon>Riboviria</taxon>
        <taxon>Orthornavirae</taxon>
        <taxon>Kitrinoviricota</taxon>
        <taxon>Magsaviricetes</taxon>
        <taxon>Nodamuvirales</taxon>
        <taxon>Nodaviridae</taxon>
        <taxon>Betanodavirus</taxon>
        <taxon>Redspotted grouper nervous necrosis virus</taxon>
    </lineage>
</organism>
<comment type="function">
    <text evidence="3">RNA-dependent RNA polymerase which replicates the viral genome composed of 2 RNA segments, RNA1 and RNA2.</text>
</comment>
<comment type="catalytic activity">
    <reaction evidence="1">
        <text>RNA(n) + a ribonucleoside 5'-triphosphate = RNA(n+1) + diphosphate</text>
        <dbReference type="Rhea" id="RHEA:21248"/>
        <dbReference type="Rhea" id="RHEA-COMP:14527"/>
        <dbReference type="Rhea" id="RHEA-COMP:17342"/>
        <dbReference type="ChEBI" id="CHEBI:33019"/>
        <dbReference type="ChEBI" id="CHEBI:61557"/>
        <dbReference type="ChEBI" id="CHEBI:140395"/>
        <dbReference type="EC" id="2.7.7.48"/>
    </reaction>
</comment>
<comment type="similarity">
    <text evidence="3">Belongs to the nodaviridae RNA polymerase family.</text>
</comment>